<keyword id="KW-0021">Allosteric enzyme</keyword>
<keyword id="KW-0274">FAD</keyword>
<keyword id="KW-0285">Flavoprotein</keyword>
<keyword id="KW-0288">FMN</keyword>
<keyword id="KW-0520">NAD</keyword>
<keyword id="KW-0560">Oxidoreductase</keyword>
<comment type="function">
    <text evidence="2">Involved in the degradation of the pyridine ring of trigonelline (TG; N-methylnicotinate) into succinate and methylamine as carbon and nitrogen sources, respectively. TgnA catalyzes the reduction of flavin (FMN or FAD) by NADH and supplies the reduced flavin to the oxygenase component TgnB.</text>
</comment>
<comment type="catalytic activity">
    <reaction evidence="2">
        <text>a reduced flavin + NAD(+) = an oxidized flavin + NADH + 2 H(+)</text>
        <dbReference type="Rhea" id="RHEA:31303"/>
        <dbReference type="ChEBI" id="CHEBI:15378"/>
        <dbReference type="ChEBI" id="CHEBI:57540"/>
        <dbReference type="ChEBI" id="CHEBI:57945"/>
        <dbReference type="ChEBI" id="CHEBI:60531"/>
        <dbReference type="ChEBI" id="CHEBI:62787"/>
        <dbReference type="EC" id="1.5.1.36"/>
    </reaction>
    <physiologicalReaction direction="right-to-left" evidence="5">
        <dbReference type="Rhea" id="RHEA:31305"/>
    </physiologicalReaction>
</comment>
<comment type="catalytic activity">
    <reaction evidence="2">
        <text>FADH2 + NAD(+) = FAD + NADH + 2 H(+)</text>
        <dbReference type="Rhea" id="RHEA:30147"/>
        <dbReference type="ChEBI" id="CHEBI:15378"/>
        <dbReference type="ChEBI" id="CHEBI:57540"/>
        <dbReference type="ChEBI" id="CHEBI:57692"/>
        <dbReference type="ChEBI" id="CHEBI:57945"/>
        <dbReference type="ChEBI" id="CHEBI:58307"/>
    </reaction>
    <physiologicalReaction direction="right-to-left" evidence="5">
        <dbReference type="Rhea" id="RHEA:30149"/>
    </physiologicalReaction>
</comment>
<comment type="catalytic activity">
    <reaction evidence="2">
        <text>FMNH2 + NAD(+) = FMN + NADH + 2 H(+)</text>
        <dbReference type="Rhea" id="RHEA:21620"/>
        <dbReference type="ChEBI" id="CHEBI:15378"/>
        <dbReference type="ChEBI" id="CHEBI:57540"/>
        <dbReference type="ChEBI" id="CHEBI:57618"/>
        <dbReference type="ChEBI" id="CHEBI:57945"/>
        <dbReference type="ChEBI" id="CHEBI:58210"/>
    </reaction>
    <physiologicalReaction direction="right-to-left" evidence="5">
        <dbReference type="Rhea" id="RHEA:21622"/>
    </physiologicalReaction>
</comment>
<comment type="activity regulation">
    <text evidence="2">Maximal reductase activity is achieved only upon trigonelline (TG) binding to the reductase component before interaction with NADH. It seems that TgnA undergoes an allosteric transition upon trigonelline (TG) binding accounting for the positive cooperativity toward NADH oxidation.</text>
</comment>
<comment type="biophysicochemical properties">
    <kinetics>
        <KM evidence="2">74 uM for NADH</KM>
        <text evidence="2">kcat is 72 sec(-1) for NADH as substrate.</text>
    </kinetics>
</comment>
<comment type="subunit">
    <text evidence="2">Homodimer. The trigonelline monooxygenase is composed of a reductase component TgnA and an oxygenase component TgnB.</text>
</comment>
<comment type="similarity">
    <text evidence="4">Belongs to the non-flavoprotein flavin reductase family.</text>
</comment>
<name>TGNA_ACIAD</name>
<dbReference type="EC" id="1.5.1.36" evidence="2"/>
<dbReference type="EMBL" id="CR543861">
    <property type="protein sequence ID" value="CAG69309.1"/>
    <property type="molecule type" value="Genomic_DNA"/>
</dbReference>
<dbReference type="RefSeq" id="WP_004928626.1">
    <property type="nucleotide sequence ID" value="NC_005966.1"/>
</dbReference>
<dbReference type="SMR" id="Q6F9F5"/>
<dbReference type="STRING" id="202950.GCA_001485005_01473"/>
<dbReference type="GeneID" id="45234828"/>
<dbReference type="KEGG" id="aci:ACIAD2544"/>
<dbReference type="eggNOG" id="COG1853">
    <property type="taxonomic scope" value="Bacteria"/>
</dbReference>
<dbReference type="HOGENOM" id="CLU_896101_0_0_6"/>
<dbReference type="OrthoDB" id="9792858at2"/>
<dbReference type="BioCyc" id="ASP62977:ACIAD_RS11555-MONOMER"/>
<dbReference type="SABIO-RK" id="Q6F9F5"/>
<dbReference type="Proteomes" id="UP000000430">
    <property type="component" value="Chromosome"/>
</dbReference>
<dbReference type="GO" id="GO:0036382">
    <property type="term" value="F:flavin reductase (NADH) activity"/>
    <property type="evidence" value="ECO:0000314"/>
    <property type="project" value="UniProtKB"/>
</dbReference>
<dbReference type="GO" id="GO:0010181">
    <property type="term" value="F:FMN binding"/>
    <property type="evidence" value="ECO:0007669"/>
    <property type="project" value="InterPro"/>
</dbReference>
<dbReference type="GO" id="GO:0052874">
    <property type="term" value="F:FMN reductase (NADH) activity"/>
    <property type="evidence" value="ECO:0007669"/>
    <property type="project" value="RHEA"/>
</dbReference>
<dbReference type="GO" id="GO:0042602">
    <property type="term" value="F:riboflavin reductase (NADPH) activity"/>
    <property type="evidence" value="ECO:0007669"/>
    <property type="project" value="TreeGrafter"/>
</dbReference>
<dbReference type="FunFam" id="2.30.110.10:FF:000099">
    <property type="entry name" value="Flavin-dependent trigonelline monooxygenase, reductase component"/>
    <property type="match status" value="1"/>
</dbReference>
<dbReference type="Gene3D" id="2.30.110.10">
    <property type="entry name" value="Electron Transport, Fmn-binding Protein, Chain A"/>
    <property type="match status" value="1"/>
</dbReference>
<dbReference type="Gene3D" id="3.90.79.10">
    <property type="entry name" value="Nucleoside Triphosphate Pyrophosphohydrolase"/>
    <property type="match status" value="1"/>
</dbReference>
<dbReference type="InterPro" id="IPR002563">
    <property type="entry name" value="Flavin_Rdtase-like_dom"/>
</dbReference>
<dbReference type="InterPro" id="IPR050268">
    <property type="entry name" value="NADH-dep_flavin_reductase"/>
</dbReference>
<dbReference type="InterPro" id="IPR012349">
    <property type="entry name" value="Split_barrel_FMN-bd"/>
</dbReference>
<dbReference type="PANTHER" id="PTHR30466">
    <property type="entry name" value="FLAVIN REDUCTASE"/>
    <property type="match status" value="1"/>
</dbReference>
<dbReference type="PANTHER" id="PTHR30466:SF11">
    <property type="entry name" value="FLAVIN-DEPENDENT MONOOXYGENASE, REDUCTASE SUBUNIT HSAB"/>
    <property type="match status" value="1"/>
</dbReference>
<dbReference type="Pfam" id="PF01613">
    <property type="entry name" value="Flavin_Reduct"/>
    <property type="match status" value="1"/>
</dbReference>
<dbReference type="SMART" id="SM00903">
    <property type="entry name" value="Flavin_Reduct"/>
    <property type="match status" value="1"/>
</dbReference>
<dbReference type="SUPFAM" id="SSF50475">
    <property type="entry name" value="FMN-binding split barrel"/>
    <property type="match status" value="1"/>
</dbReference>
<proteinExistence type="evidence at protein level"/>
<accession>Q6F9F5</accession>
<evidence type="ECO:0000250" key="1">
    <source>
        <dbReference type="UniProtKB" id="Q92ZM6"/>
    </source>
</evidence>
<evidence type="ECO:0000269" key="2">
    <source>
    </source>
</evidence>
<evidence type="ECO:0000303" key="3">
    <source>
    </source>
</evidence>
<evidence type="ECO:0000305" key="4"/>
<evidence type="ECO:0000305" key="5">
    <source>
    </source>
</evidence>
<evidence type="ECO:0000312" key="6">
    <source>
        <dbReference type="EMBL" id="CAG69309.1"/>
    </source>
</evidence>
<evidence type="ECO:0000312" key="7">
    <source>
        <dbReference type="Proteomes" id="UP000000430"/>
    </source>
</evidence>
<gene>
    <name evidence="3" type="primary">tgnA</name>
    <name evidence="6" type="ordered locus">ACIAD2544</name>
</gene>
<protein>
    <recommendedName>
        <fullName evidence="3">Flavin-dependent trigonelline monooxygenase, reductase component</fullName>
        <ecNumber evidence="2">1.5.1.36</ecNumber>
    </recommendedName>
    <alternativeName>
        <fullName evidence="5">Flavin:NADH reductase</fullName>
    </alternativeName>
</protein>
<organism>
    <name type="scientific">Acinetobacter baylyi (strain ATCC 33305 / BD413 / ADP1)</name>
    <dbReference type="NCBI Taxonomy" id="62977"/>
    <lineage>
        <taxon>Bacteria</taxon>
        <taxon>Pseudomonadati</taxon>
        <taxon>Pseudomonadota</taxon>
        <taxon>Gammaproteobacteria</taxon>
        <taxon>Moraxellales</taxon>
        <taxon>Moraxellaceae</taxon>
        <taxon>Acinetobacter</taxon>
    </lineage>
</organism>
<reference key="1">
    <citation type="journal article" date="2004" name="Nucleic Acids Res.">
        <title>Unique features revealed by the genome sequence of Acinetobacter sp. ADP1, a versatile and naturally transformation competent bacterium.</title>
        <authorList>
            <person name="Barbe V."/>
            <person name="Vallenet D."/>
            <person name="Fonknechten N."/>
            <person name="Kreimeyer A."/>
            <person name="Oztas S."/>
            <person name="Labarre L."/>
            <person name="Cruveiller S."/>
            <person name="Robert C."/>
            <person name="Duprat S."/>
            <person name="Wincker P."/>
            <person name="Ornston L.N."/>
            <person name="Weissenbach J."/>
            <person name="Marliere P."/>
            <person name="Cohen G.N."/>
            <person name="Medigue C."/>
        </authorList>
    </citation>
    <scope>NUCLEOTIDE SEQUENCE [LARGE SCALE GENOMIC DNA]</scope>
    <source>
        <strain evidence="7">ATCC 33305 / BD413 / ADP1</strain>
    </source>
</reference>
<reference key="2">
    <citation type="journal article" date="2018" name="Proc. Natl. Acad. Sci. U.S.A.">
        <title>Elucidation of the trigonelline degradation pathway reveals previously undescribed enzymes and metabolites.</title>
        <authorList>
            <person name="Perchat N."/>
            <person name="Saaidi P.L."/>
            <person name="Darii E."/>
            <person name="Pelle C."/>
            <person name="Petit J.L."/>
            <person name="Besnard-Gonnet M."/>
            <person name="de Berardinis V."/>
            <person name="Dupont M."/>
            <person name="Gimbernat A."/>
            <person name="Salanoubat M."/>
            <person name="Fischer C."/>
            <person name="Perret A."/>
        </authorList>
    </citation>
    <scope>FUNCTION</scope>
    <scope>CATALYTIC ACTIVITY</scope>
    <scope>BIOPHYSICOCHEMICAL PROPERTIES</scope>
    <scope>ACTIVITY REGULATION</scope>
    <scope>SUBUNIT</scope>
    <source>
        <strain>ATCC 33305 / BD413 / ADP1</strain>
    </source>
</reference>
<feature type="chain" id="PRO_0000445258" description="Flavin-dependent trigonelline monooxygenase, reductase component">
    <location>
        <begin position="1"/>
        <end position="310"/>
    </location>
</feature>
<feature type="binding site" evidence="1">
    <location>
        <begin position="40"/>
        <end position="43"/>
    </location>
    <ligand>
        <name>FMN</name>
        <dbReference type="ChEBI" id="CHEBI:58210"/>
    </ligand>
</feature>
<feature type="binding site" evidence="1">
    <location>
        <begin position="57"/>
        <end position="63"/>
    </location>
    <ligand>
        <name>FMN</name>
        <dbReference type="ChEBI" id="CHEBI:58210"/>
    </ligand>
</feature>
<feature type="binding site" evidence="1">
    <location>
        <begin position="90"/>
        <end position="91"/>
    </location>
    <ligand>
        <name>FMN</name>
        <dbReference type="ChEBI" id="CHEBI:58210"/>
    </ligand>
</feature>
<feature type="binding site" evidence="1">
    <location>
        <position position="97"/>
    </location>
    <ligand>
        <name>FMN</name>
        <dbReference type="ChEBI" id="CHEBI:58210"/>
    </ligand>
</feature>
<sequence>MSEMDAVNKIRELRDAFGSFMTGVTVVTTCKDDGTPLGFTANSFASVSLDPALLLVSIAKTSSNYHNFADASHFAINILAEEQKDVSNIFARPSDDRFAQLVWAKSEYQNPLIDGVSAWFDCTTYQVVDAGDHAILIGKVENFTSAGFAGLGYYRGAYFTPAKSSTDVISSMKVMMMALIGHENKILLEQTADHKWALPHLMVEKDGAEKALEKIFATYQPEASPSFIYSVYDDVTTQQQYIAFLCNTPVPTAHKGQFVDLNDLEKLTFTDSALQSMLMRYRKENYLKTYGVYYGNHTSGTVRQIVKEGV</sequence>